<evidence type="ECO:0000255" key="1">
    <source>
        <dbReference type="HAMAP-Rule" id="MF_00360"/>
    </source>
</evidence>
<evidence type="ECO:0000256" key="2">
    <source>
        <dbReference type="SAM" id="MobiDB-lite"/>
    </source>
</evidence>
<evidence type="ECO:0000305" key="3"/>
<accession>Q02F83</accession>
<reference key="1">
    <citation type="journal article" date="2006" name="Genome Biol.">
        <title>Genomic analysis reveals that Pseudomonas aeruginosa virulence is combinatorial.</title>
        <authorList>
            <person name="Lee D.G."/>
            <person name="Urbach J.M."/>
            <person name="Wu G."/>
            <person name="Liberati N.T."/>
            <person name="Feinbaum R.L."/>
            <person name="Miyata S."/>
            <person name="Diggins L.T."/>
            <person name="He J."/>
            <person name="Saucier M."/>
            <person name="Deziel E."/>
            <person name="Friedman L."/>
            <person name="Li L."/>
            <person name="Grills G."/>
            <person name="Montgomery K."/>
            <person name="Kucherlapati R."/>
            <person name="Rahme L.G."/>
            <person name="Ausubel F.M."/>
        </authorList>
    </citation>
    <scope>NUCLEOTIDE SEQUENCE [LARGE SCALE GENOMIC DNA]</scope>
    <source>
        <strain>UCBPP-PA14</strain>
    </source>
</reference>
<proteinExistence type="inferred from homology"/>
<feature type="chain" id="PRO_1000005317" description="Small ribosomal subunit protein bS6">
    <location>
        <begin position="1"/>
        <end position="139"/>
    </location>
</feature>
<feature type="region of interest" description="Disordered" evidence="2">
    <location>
        <begin position="95"/>
        <end position="139"/>
    </location>
</feature>
<feature type="compositionally biased region" description="Basic and acidic residues" evidence="2">
    <location>
        <begin position="95"/>
        <end position="121"/>
    </location>
</feature>
<feature type="compositionally biased region" description="Acidic residues" evidence="2">
    <location>
        <begin position="124"/>
        <end position="139"/>
    </location>
</feature>
<organism>
    <name type="scientific">Pseudomonas aeruginosa (strain UCBPP-PA14)</name>
    <dbReference type="NCBI Taxonomy" id="208963"/>
    <lineage>
        <taxon>Bacteria</taxon>
        <taxon>Pseudomonadati</taxon>
        <taxon>Pseudomonadota</taxon>
        <taxon>Gammaproteobacteria</taxon>
        <taxon>Pseudomonadales</taxon>
        <taxon>Pseudomonadaceae</taxon>
        <taxon>Pseudomonas</taxon>
    </lineage>
</organism>
<comment type="function">
    <text evidence="1">Binds together with bS18 to 16S ribosomal RNA.</text>
</comment>
<comment type="similarity">
    <text evidence="1">Belongs to the bacterial ribosomal protein bS6 family.</text>
</comment>
<gene>
    <name evidence="1" type="primary">rpsF</name>
    <name type="ordered locus">PA14_65180</name>
</gene>
<sequence length="139" mass="16165">MRHYEIVFLVHPDQSEQVGGMVERYTKAIEEDGGKIHRLEDWGRRQLAYAINNVHKAHYVLMNVECSAKALAELEDNFRYNDAVIRNLVMRRDEAVTEQSEMLKAEESRNERRERRERPNDNAEGADGDDNSDSDNADE</sequence>
<keyword id="KW-0687">Ribonucleoprotein</keyword>
<keyword id="KW-0689">Ribosomal protein</keyword>
<keyword id="KW-0694">RNA-binding</keyword>
<keyword id="KW-0699">rRNA-binding</keyword>
<protein>
    <recommendedName>
        <fullName evidence="1">Small ribosomal subunit protein bS6</fullName>
    </recommendedName>
    <alternativeName>
        <fullName evidence="3">30S ribosomal protein S6</fullName>
    </alternativeName>
</protein>
<name>RS6_PSEAB</name>
<dbReference type="EMBL" id="CP000438">
    <property type="protein sequence ID" value="ABJ14320.1"/>
    <property type="molecule type" value="Genomic_DNA"/>
</dbReference>
<dbReference type="RefSeq" id="WP_003095636.1">
    <property type="nucleotide sequence ID" value="NZ_CP034244.1"/>
</dbReference>
<dbReference type="SMR" id="Q02F83"/>
<dbReference type="GeneID" id="77223482"/>
<dbReference type="KEGG" id="pau:PA14_65180"/>
<dbReference type="PseudoCAP" id="PA14_65180"/>
<dbReference type="HOGENOM" id="CLU_113441_6_1_6"/>
<dbReference type="BioCyc" id="PAER208963:G1G74-5508-MONOMER"/>
<dbReference type="Proteomes" id="UP000000653">
    <property type="component" value="Chromosome"/>
</dbReference>
<dbReference type="GO" id="GO:0022627">
    <property type="term" value="C:cytosolic small ribosomal subunit"/>
    <property type="evidence" value="ECO:0007669"/>
    <property type="project" value="TreeGrafter"/>
</dbReference>
<dbReference type="GO" id="GO:0070181">
    <property type="term" value="F:small ribosomal subunit rRNA binding"/>
    <property type="evidence" value="ECO:0007669"/>
    <property type="project" value="TreeGrafter"/>
</dbReference>
<dbReference type="GO" id="GO:0003735">
    <property type="term" value="F:structural constituent of ribosome"/>
    <property type="evidence" value="ECO:0007669"/>
    <property type="project" value="InterPro"/>
</dbReference>
<dbReference type="GO" id="GO:0006412">
    <property type="term" value="P:translation"/>
    <property type="evidence" value="ECO:0007669"/>
    <property type="project" value="UniProtKB-UniRule"/>
</dbReference>
<dbReference type="CDD" id="cd00473">
    <property type="entry name" value="bS6"/>
    <property type="match status" value="1"/>
</dbReference>
<dbReference type="FunFam" id="3.30.70.60:FF:000003">
    <property type="entry name" value="30S ribosomal protein S6"/>
    <property type="match status" value="1"/>
</dbReference>
<dbReference type="Gene3D" id="3.30.70.60">
    <property type="match status" value="1"/>
</dbReference>
<dbReference type="HAMAP" id="MF_00360">
    <property type="entry name" value="Ribosomal_bS6"/>
    <property type="match status" value="1"/>
</dbReference>
<dbReference type="InterPro" id="IPR000529">
    <property type="entry name" value="Ribosomal_bS6"/>
</dbReference>
<dbReference type="InterPro" id="IPR020815">
    <property type="entry name" value="Ribosomal_bS6_CS"/>
</dbReference>
<dbReference type="InterPro" id="IPR035980">
    <property type="entry name" value="Ribosomal_bS6_sf"/>
</dbReference>
<dbReference type="InterPro" id="IPR020814">
    <property type="entry name" value="Ribosomal_S6_plastid/chlpt"/>
</dbReference>
<dbReference type="InterPro" id="IPR014717">
    <property type="entry name" value="Transl_elong_EF1B/ribsomal_bS6"/>
</dbReference>
<dbReference type="NCBIfam" id="TIGR00166">
    <property type="entry name" value="S6"/>
    <property type="match status" value="1"/>
</dbReference>
<dbReference type="PANTHER" id="PTHR21011">
    <property type="entry name" value="MITOCHONDRIAL 28S RIBOSOMAL PROTEIN S6"/>
    <property type="match status" value="1"/>
</dbReference>
<dbReference type="PANTHER" id="PTHR21011:SF1">
    <property type="entry name" value="SMALL RIBOSOMAL SUBUNIT PROTEIN BS6M"/>
    <property type="match status" value="1"/>
</dbReference>
<dbReference type="Pfam" id="PF01250">
    <property type="entry name" value="Ribosomal_S6"/>
    <property type="match status" value="1"/>
</dbReference>
<dbReference type="SUPFAM" id="SSF54995">
    <property type="entry name" value="Ribosomal protein S6"/>
    <property type="match status" value="1"/>
</dbReference>
<dbReference type="PROSITE" id="PS01048">
    <property type="entry name" value="RIBOSOMAL_S6"/>
    <property type="match status" value="1"/>
</dbReference>